<gene>
    <name evidence="7 10" type="primary">ZNF609</name>
    <name evidence="8" type="synonym">KIAA0295</name>
</gene>
<name>ZN609_HUMAN</name>
<comment type="function">
    <text evidence="1">Transcription factor, which activates RAG1, and possibly RAG2, transcription. Through the regulation of RAG1/2 expression, may regulate thymocyte maturation. Along with NIPBL and the multiprotein complex Integrator, promotes cortical neuron migration during brain development by regulating the transcription of crucial genes in this process. Preferentially binds promoters containing paused RNA polymerase II. Up-regulates the expression of SEMA3A, NRP1, PLXND1 and GABBR2 genes, among others.</text>
</comment>
<comment type="function">
    <molecule>Isoform 2</molecule>
    <text evidence="5">Involved in the regulation of myoblast proliferation during myogenesis.</text>
</comment>
<comment type="subunit">
    <text evidence="1 6">Interacts (via N-terminus) with NIPBL (By similarity). Interacts with INTS13; promoting association with the integrator complex (PubMed:38906142).</text>
</comment>
<comment type="subcellular location">
    <subcellularLocation>
        <location evidence="5">Nucleus</location>
    </subcellularLocation>
</comment>
<comment type="subcellular location">
    <molecule>Isoform 2</molecule>
    <subcellularLocation>
        <location evidence="5">Nucleus</location>
    </subcellularLocation>
</comment>
<comment type="alternative products">
    <event type="alternative splicing"/>
    <isoform>
        <id>O15014-1</id>
        <name>1</name>
        <sequence type="displayed"/>
    </isoform>
    <isoform>
        <id>O15014-2</id>
        <name>2</name>
        <sequence type="described" ref="VSP_059082 VSP_059083"/>
    </isoform>
</comment>
<comment type="tissue specificity">
    <text evidence="5">Isoform 1: Expressed in myoblasts and myotubes. Isoform 2: Expressed in myoblasts and myotubes, with a preference in undifferentiated myoblasts.</text>
</comment>
<comment type="induction">
    <text evidence="4 5">Isoform 1: Up-regulated during neuronal differentiation in retinoic acid-treated SH-SY5Y cells (PubMed:25921068). Isoform 2: Down-regulated during myogenesis (PubMed:28344082).</text>
</comment>
<comment type="miscellaneous">
    <molecule>Isoform 2</molecule>
    <text evidence="5">Produced by a back-splicing reaction which joins the 5'-splice site of the first coding exon with the 3'-splice site of the upstream intron resulting in a circular RNA, called circ-ZNF609. The translation starts with the same initiator methionine as that of the linear transcript encoding isoform 1. The stop codon is created upon circularization.</text>
</comment>
<comment type="online information" name="Protein Spotlight">
    <link uri="https://www.proteinspotlight.org/back_issues/199/"/>
    <text>Round in circles - Issue 199 of January 2018</text>
</comment>
<accession>O15014</accession>
<accession>Q0D2I2</accession>
<reference key="1">
    <citation type="journal article" date="2006" name="Nature">
        <title>Analysis of the DNA sequence and duplication history of human chromosome 15.</title>
        <authorList>
            <person name="Zody M.C."/>
            <person name="Garber M."/>
            <person name="Sharpe T."/>
            <person name="Young S.K."/>
            <person name="Rowen L."/>
            <person name="O'Neill K."/>
            <person name="Whittaker C.A."/>
            <person name="Kamal M."/>
            <person name="Chang J.L."/>
            <person name="Cuomo C.A."/>
            <person name="Dewar K."/>
            <person name="FitzGerald M.G."/>
            <person name="Kodira C.D."/>
            <person name="Madan A."/>
            <person name="Qin S."/>
            <person name="Yang X."/>
            <person name="Abbasi N."/>
            <person name="Abouelleil A."/>
            <person name="Arachchi H.M."/>
            <person name="Baradarani L."/>
            <person name="Birditt B."/>
            <person name="Bloom S."/>
            <person name="Bloom T."/>
            <person name="Borowsky M.L."/>
            <person name="Burke J."/>
            <person name="Butler J."/>
            <person name="Cook A."/>
            <person name="DeArellano K."/>
            <person name="DeCaprio D."/>
            <person name="Dorris L. III"/>
            <person name="Dors M."/>
            <person name="Eichler E.E."/>
            <person name="Engels R."/>
            <person name="Fahey J."/>
            <person name="Fleetwood P."/>
            <person name="Friedman C."/>
            <person name="Gearin G."/>
            <person name="Hall J.L."/>
            <person name="Hensley G."/>
            <person name="Johnson E."/>
            <person name="Jones C."/>
            <person name="Kamat A."/>
            <person name="Kaur A."/>
            <person name="Locke D.P."/>
            <person name="Madan A."/>
            <person name="Munson G."/>
            <person name="Jaffe D.B."/>
            <person name="Lui A."/>
            <person name="Macdonald P."/>
            <person name="Mauceli E."/>
            <person name="Naylor J.W."/>
            <person name="Nesbitt R."/>
            <person name="Nicol R."/>
            <person name="O'Leary S.B."/>
            <person name="Ratcliffe A."/>
            <person name="Rounsley S."/>
            <person name="She X."/>
            <person name="Sneddon K.M.B."/>
            <person name="Stewart S."/>
            <person name="Sougnez C."/>
            <person name="Stone S.M."/>
            <person name="Topham K."/>
            <person name="Vincent D."/>
            <person name="Wang S."/>
            <person name="Zimmer A.R."/>
            <person name="Birren B.W."/>
            <person name="Hood L."/>
            <person name="Lander E.S."/>
            <person name="Nusbaum C."/>
        </authorList>
    </citation>
    <scope>NUCLEOTIDE SEQUENCE [LARGE SCALE GENOMIC DNA]</scope>
</reference>
<reference key="2">
    <citation type="journal article" date="1997" name="DNA Res.">
        <title>Prediction of the coding sequences of unidentified human genes. VII. The complete sequences of 100 new cDNA clones from brain which can code for large proteins in vitro.</title>
        <authorList>
            <person name="Nagase T."/>
            <person name="Ishikawa K."/>
            <person name="Nakajima D."/>
            <person name="Ohira M."/>
            <person name="Seki N."/>
            <person name="Miyajima N."/>
            <person name="Tanaka A."/>
            <person name="Kotani H."/>
            <person name="Nomura N."/>
            <person name="Ohara O."/>
        </authorList>
    </citation>
    <scope>NUCLEOTIDE SEQUENCE [LARGE SCALE MRNA] OF 431-1411</scope>
    <source>
        <tissue>Brain</tissue>
    </source>
</reference>
<reference key="3">
    <citation type="journal article" date="2004" name="Genome Res.">
        <title>The status, quality, and expansion of the NIH full-length cDNA project: the Mammalian Gene Collection (MGC).</title>
        <authorList>
            <consortium name="The MGC Project Team"/>
        </authorList>
    </citation>
    <scope>NUCLEOTIDE SEQUENCE [LARGE SCALE MRNA] OF 1341-1411</scope>
    <source>
        <tissue>Skin</tissue>
    </source>
</reference>
<reference key="4">
    <citation type="journal article" date="2006" name="Cell">
        <title>Global, in vivo, and site-specific phosphorylation dynamics in signaling networks.</title>
        <authorList>
            <person name="Olsen J.V."/>
            <person name="Blagoev B."/>
            <person name="Gnad F."/>
            <person name="Macek B."/>
            <person name="Kumar C."/>
            <person name="Mortensen P."/>
            <person name="Mann M."/>
        </authorList>
    </citation>
    <scope>PHOSPHORYLATION [LARGE SCALE ANALYSIS] AT SER-849</scope>
    <scope>IDENTIFICATION BY MASS SPECTROMETRY [LARGE SCALE ANALYSIS]</scope>
    <source>
        <tissue>Cervix carcinoma</tissue>
    </source>
</reference>
<reference key="5">
    <citation type="journal article" date="2008" name="Proc. Natl. Acad. Sci. U.S.A.">
        <title>A quantitative atlas of mitotic phosphorylation.</title>
        <authorList>
            <person name="Dephoure N."/>
            <person name="Zhou C."/>
            <person name="Villen J."/>
            <person name="Beausoleil S.A."/>
            <person name="Bakalarski C.E."/>
            <person name="Elledge S.J."/>
            <person name="Gygi S.P."/>
        </authorList>
    </citation>
    <scope>PHOSPHORYLATION [LARGE SCALE ANALYSIS] AT SER-358; SER-576; SER-578; SER-846; SER-849 AND SER-1055</scope>
    <scope>IDENTIFICATION BY MASS SPECTROMETRY [LARGE SCALE ANALYSIS]</scope>
    <source>
        <tissue>Cervix carcinoma</tissue>
    </source>
</reference>
<reference key="6">
    <citation type="journal article" date="2009" name="Anal. Chem.">
        <title>Lys-N and trypsin cover complementary parts of the phosphoproteome in a refined SCX-based approach.</title>
        <authorList>
            <person name="Gauci S."/>
            <person name="Helbig A.O."/>
            <person name="Slijper M."/>
            <person name="Krijgsveld J."/>
            <person name="Heck A.J."/>
            <person name="Mohammed S."/>
        </authorList>
    </citation>
    <scope>IDENTIFICATION BY MASS SPECTROMETRY [LARGE SCALE ANALYSIS]</scope>
</reference>
<reference key="7">
    <citation type="journal article" date="2009" name="Sci. Signal.">
        <title>Quantitative phosphoproteomic analysis of T cell receptor signaling reveals system-wide modulation of protein-protein interactions.</title>
        <authorList>
            <person name="Mayya V."/>
            <person name="Lundgren D.H."/>
            <person name="Hwang S.-I."/>
            <person name="Rezaul K."/>
            <person name="Wu L."/>
            <person name="Eng J.K."/>
            <person name="Rodionov V."/>
            <person name="Han D.K."/>
        </authorList>
    </citation>
    <scope>PHOSPHORYLATION [LARGE SCALE ANALYSIS] AT SER-842 AND SER-849</scope>
    <scope>IDENTIFICATION BY MASS SPECTROMETRY [LARGE SCALE ANALYSIS]</scope>
    <source>
        <tissue>Leukemic T-cell</tissue>
    </source>
</reference>
<reference key="8">
    <citation type="journal article" date="2010" name="Sci. Signal.">
        <title>Quantitative phosphoproteomics reveals widespread full phosphorylation site occupancy during mitosis.</title>
        <authorList>
            <person name="Olsen J.V."/>
            <person name="Vermeulen M."/>
            <person name="Santamaria A."/>
            <person name="Kumar C."/>
            <person name="Miller M.L."/>
            <person name="Jensen L.J."/>
            <person name="Gnad F."/>
            <person name="Cox J."/>
            <person name="Jensen T.S."/>
            <person name="Nigg E.A."/>
            <person name="Brunak S."/>
            <person name="Mann M."/>
        </authorList>
    </citation>
    <scope>PHOSPHORYLATION [LARGE SCALE ANALYSIS] AT SER-576; SER-578 AND SER-804</scope>
    <scope>IDENTIFICATION BY MASS SPECTROMETRY [LARGE SCALE ANALYSIS]</scope>
    <source>
        <tissue>Cervix carcinoma</tissue>
    </source>
</reference>
<reference key="9">
    <citation type="journal article" date="2011" name="BMC Syst. Biol.">
        <title>Initial characterization of the human central proteome.</title>
        <authorList>
            <person name="Burkard T.R."/>
            <person name="Planyavsky M."/>
            <person name="Kaupe I."/>
            <person name="Breitwieser F.P."/>
            <person name="Buerckstuemmer T."/>
            <person name="Bennett K.L."/>
            <person name="Superti-Furga G."/>
            <person name="Colinge J."/>
        </authorList>
    </citation>
    <scope>IDENTIFICATION BY MASS SPECTROMETRY [LARGE SCALE ANALYSIS]</scope>
</reference>
<reference key="10">
    <citation type="journal article" date="2011" name="Sci. Signal.">
        <title>System-wide temporal characterization of the proteome and phosphoproteome of human embryonic stem cell differentiation.</title>
        <authorList>
            <person name="Rigbolt K.T."/>
            <person name="Prokhorova T.A."/>
            <person name="Akimov V."/>
            <person name="Henningsen J."/>
            <person name="Johansen P.T."/>
            <person name="Kratchmarova I."/>
            <person name="Kassem M."/>
            <person name="Mann M."/>
            <person name="Olsen J.V."/>
            <person name="Blagoev B."/>
        </authorList>
    </citation>
    <scope>PHOSPHORYLATION [LARGE SCALE ANALYSIS] AT SER-576; SER-578; THR-746 AND SER-1055</scope>
    <scope>IDENTIFICATION BY MASS SPECTROMETRY [LARGE SCALE ANALYSIS]</scope>
</reference>
<reference key="11">
    <citation type="journal article" date="2013" name="J. Proteome Res.">
        <title>Toward a comprehensive characterization of a human cancer cell phosphoproteome.</title>
        <authorList>
            <person name="Zhou H."/>
            <person name="Di Palma S."/>
            <person name="Preisinger C."/>
            <person name="Peng M."/>
            <person name="Polat A.N."/>
            <person name="Heck A.J."/>
            <person name="Mohammed S."/>
        </authorList>
    </citation>
    <scope>PHOSPHORYLATION [LARGE SCALE ANALYSIS] AT SER-358; SER-379; THR-381; SER-413; SER-433; SER-446; SER-452; SER-467; SER-470; SER-576; SER-578; SER-743; THR-746; SER-758; SER-804; THR-823; SER-842; SER-849 AND SER-1055</scope>
    <scope>IDENTIFICATION BY MASS SPECTROMETRY [LARGE SCALE ANALYSIS]</scope>
    <source>
        <tissue>Cervix carcinoma</tissue>
        <tissue>Erythroleukemia</tissue>
    </source>
</reference>
<reference key="12">
    <citation type="journal article" date="2014" name="J. Proteomics">
        <title>An enzyme assisted RP-RPLC approach for in-depth analysis of human liver phosphoproteome.</title>
        <authorList>
            <person name="Bian Y."/>
            <person name="Song C."/>
            <person name="Cheng K."/>
            <person name="Dong M."/>
            <person name="Wang F."/>
            <person name="Huang J."/>
            <person name="Sun D."/>
            <person name="Wang L."/>
            <person name="Ye M."/>
            <person name="Zou H."/>
        </authorList>
    </citation>
    <scope>PHOSPHORYLATION [LARGE SCALE ANALYSIS] AT SER-413 AND SER-1055</scope>
    <scope>IDENTIFICATION BY MASS SPECTROMETRY [LARGE SCALE ANALYSIS]</scope>
    <source>
        <tissue>Liver</tissue>
    </source>
</reference>
<reference key="13">
    <citation type="journal article" date="2014" name="Nat. Struct. Mol. Biol.">
        <title>Uncovering global SUMOylation signaling networks in a site-specific manner.</title>
        <authorList>
            <person name="Hendriks I.A."/>
            <person name="D'Souza R.C."/>
            <person name="Yang B."/>
            <person name="Verlaan-de Vries M."/>
            <person name="Mann M."/>
            <person name="Vertegaal A.C."/>
        </authorList>
    </citation>
    <scope>SUMOYLATION [LARGE SCALE ANALYSIS] AT LYS-789</scope>
    <scope>IDENTIFICATION BY MASS SPECTROMETRY [LARGE SCALE ANALYSIS]</scope>
</reference>
<reference key="14">
    <citation type="journal article" date="2015" name="Mol. Cell">
        <title>Circular RNAs in the mammalian brain are highly abundant, conserved, and dynamically expressed.</title>
        <authorList>
            <person name="Rybak-Wolf A."/>
            <person name="Stottmeister C."/>
            <person name="Glazar P."/>
            <person name="Jens M."/>
            <person name="Pino N."/>
            <person name="Giusti S."/>
            <person name="Hanan M."/>
            <person name="Behm M."/>
            <person name="Bartok O."/>
            <person name="Ashwal-Fluss R."/>
            <person name="Herzog M."/>
            <person name="Schreyer L."/>
            <person name="Papavasileiou P."/>
            <person name="Ivanov A."/>
            <person name="Oehman M."/>
            <person name="Refojo D."/>
            <person name="Kadener S."/>
            <person name="Rajewsky N."/>
        </authorList>
    </citation>
    <scope>INDUCTION</scope>
</reference>
<reference key="15">
    <citation type="journal article" date="2017" name="Mol. Cell">
        <title>Circ-ZNF609 is a circular RNA that can be translated and functions in myogenesis.</title>
        <authorList>
            <person name="Legnini I."/>
            <person name="Di Timoteo G."/>
            <person name="Rossi F."/>
            <person name="Morlando M."/>
            <person name="Briganti F."/>
            <person name="Sthandier O."/>
            <person name="Fatica A."/>
            <person name="Santini T."/>
            <person name="Andronache A."/>
            <person name="Wade M."/>
            <person name="Laneve P."/>
            <person name="Rajewsky N."/>
            <person name="Bozzoni I."/>
        </authorList>
    </citation>
    <scope>FUNCTION (ISOFORM 2)</scope>
    <scope>TISSUE SPECIFICITY</scope>
    <scope>INDUCTION</scope>
    <scope>SUBCELLULAR LOCATION (ISOFORM 2)</scope>
    <scope>IDENTIFICATION (ISOFORM 2)</scope>
</reference>
<reference key="16">
    <citation type="journal article" date="2017" name="Nat. Struct. Mol. Biol.">
        <title>Site-specific mapping of the human SUMO proteome reveals co-modification with phosphorylation.</title>
        <authorList>
            <person name="Hendriks I.A."/>
            <person name="Lyon D."/>
            <person name="Young C."/>
            <person name="Jensen L.J."/>
            <person name="Vertegaal A.C."/>
            <person name="Nielsen M.L."/>
        </authorList>
    </citation>
    <scope>SUMOYLATION [LARGE SCALE ANALYSIS] AT LYS-479; LYS-789; LYS-1061; LYS-1153 AND LYS-1297</scope>
    <scope>IDENTIFICATION BY MASS SPECTROMETRY [LARGE SCALE ANALYSIS]</scope>
</reference>
<reference evidence="11" key="17">
    <citation type="journal article" date="2024" name="Mol. Cell">
        <title>Basis of gene-specific transcription regulation by the Integrator complex.</title>
        <authorList>
            <person name="Sabath K."/>
            <person name="Nabih A."/>
            <person name="Arnold C."/>
            <person name="Moussa R."/>
            <person name="Domjan D."/>
            <person name="Zaugg J.B."/>
            <person name="Jonas S."/>
        </authorList>
    </citation>
    <scope>X-RAY CRYSTALLOGRAPHY (2.50 ANGSTROMS) OF 25-41 IN COMPLEX WITH THE INTEGRATOR COMPLEX</scope>
    <scope>INTERACTION WITH INTS13</scope>
    <scope>MUTAGENESIS OF ILE-36 AND ASP-37</scope>
</reference>
<sequence>MSLSSGASGGKGVDANPVETYDSGDEWDIGVGNLIIDLDADLEKDQQKLEMSGSKEVGIPAPNAVATLPDNIKFVTPVPGPQGKEGKSKSKRSKSGKDTSKPTPGTSLFTPSEGAASKKEVQGRSGDGANAGGLVAAIAPKGSEKAAKASRSVAGSKKEKENSSSKSKKERSEGVGTCSEKDPGVLQPVPLGGRGGQYDGSAGVDTGAVEPLGSIAIEPGAALNPLGTKPEPEEGENECRLLKKVKSEKMESPVSTPAVLPIHLLVPVVNNDISSPCEQIMVRTRSVGVNTCDVALATEPECLGPCEPGTSVNLEGIVWQETEDGMLVVNVTWRNKTYVGTLLDCTRHDWAPPRFCDSPTSDLEMRNGRGRGKRMRPNSNTPVNETATASDSKGTSNSSKTRAGANSKGRRGSQNSSEHRPPASSTSEDVKASPSSANKRKNKPLSDMELNSSSEDSKGSKRVRTNSMGSATGPLPGTKVEPTVLDRNCPSPVLIDCPHPNCNKKYKHINGLKYHQAHAHTDDDSKPEADGDSEYGEEPILHADLGSCNGASVSQKGSLSPARSATPKVRLVEPHSPSPSSKFSTKGLCKKKLSGEGDTDLGALSNDGSDDGPSVMDETSNDAFDSLERKCMEKEKCKKPSSLKPEKIPSKSLKSARPIAPAIPPQQIYTFQTATFTAASPGSSSGLTATVAQAMPNSPQLKPIQPKPTVMGEPFTVNPALTPAKDKKKKDKKKKESSKELESPLTPGKVCRAEEGKSPFRESSGDGMKMEGLLNGSSDPHQSRLASIKAEADKIYSFTDNAPSPSIGGSSRLENTTPTQPLTPLHVVTQNGAEASSVKTNSPAYSDISDAGEDGEGKVDSVKSKDAEQLVKEGAKKTLFPPQPQSKDSPYYQGFESYYSPSYAQSSPGALNPSSQAGVESQALKTKRDEEPESIEGKVKNDICEEKKPELSSSSQQPSVIQQRPNMYMQSLYYNQYAYVPPYGYSDQSYHTHLLSTNTAYRQQYEEQQKRQSLEQQQRGVDKKAEMGLKEREAALKEEWKQKPSIPPTLTKAPSLTDLVKSGPGKAKEPGADPAKSVIIPKLDDSSKLPGQAPEGLKVKLSDASHLSKEASEAKTGAECGRQAEMDPILWYRQEAEPRMWTYVYPAKYSDIKSEDERWKEERDRKLKEERSRSKDSVPKEDGKESTSSDCKLPTSEESRLGSKEPRPSVHVPVSSPLTQHQSYIPYMHGYSYSQSYDPNHPSYRSMPAVMMQNYPGSYLPSSYSFSPYGSKVSGGEDADKARASPSVTCKSSSESKALDILQQHASHYKSKSPTISDKTSQERDRGGCGVVGGGGSCSSVGGASGGERSVDRPRTSPSQRLMSTHHHHHHLGYSLLPAQYNLPYAAGLSSTAIVASQQGSTPSLYPPPRR</sequence>
<feature type="chain" id="PRO_0000280422" description="Zinc finger protein 609">
    <location>
        <begin position="1"/>
        <end position="1411"/>
    </location>
</feature>
<feature type="zinc finger region" description="C2H2-type" evidence="2">
    <location>
        <begin position="495"/>
        <end position="520"/>
    </location>
</feature>
<feature type="region of interest" description="Disordered" evidence="3">
    <location>
        <begin position="1"/>
        <end position="26"/>
    </location>
</feature>
<feature type="region of interest" description="Disordered" evidence="3">
    <location>
        <begin position="47"/>
        <end position="190"/>
    </location>
</feature>
<feature type="region of interest" description="Disordered" evidence="3">
    <location>
        <begin position="353"/>
        <end position="484"/>
    </location>
</feature>
<feature type="region of interest" description="Disordered" evidence="3">
    <location>
        <begin position="517"/>
        <end position="659"/>
    </location>
</feature>
<feature type="region of interest" description="Disordered" evidence="3">
    <location>
        <begin position="679"/>
        <end position="963"/>
    </location>
</feature>
<feature type="region of interest" description="Disordered" evidence="3">
    <location>
        <begin position="1005"/>
        <end position="1125"/>
    </location>
</feature>
<feature type="region of interest" description="Disordered" evidence="3">
    <location>
        <begin position="1153"/>
        <end position="1221"/>
    </location>
</feature>
<feature type="region of interest" description="Disordered" evidence="3">
    <location>
        <begin position="1270"/>
        <end position="1367"/>
    </location>
</feature>
<feature type="compositionally biased region" description="Polar residues" evidence="3">
    <location>
        <begin position="377"/>
        <end position="401"/>
    </location>
</feature>
<feature type="compositionally biased region" description="Polar residues" evidence="3">
    <location>
        <begin position="423"/>
        <end position="437"/>
    </location>
</feature>
<feature type="compositionally biased region" description="Basic and acidic residues" evidence="3">
    <location>
        <begin position="519"/>
        <end position="529"/>
    </location>
</feature>
<feature type="compositionally biased region" description="Polar residues" evidence="3">
    <location>
        <begin position="549"/>
        <end position="563"/>
    </location>
</feature>
<feature type="compositionally biased region" description="Basic and acidic residues" evidence="3">
    <location>
        <begin position="626"/>
        <end position="649"/>
    </location>
</feature>
<feature type="compositionally biased region" description="Polar residues" evidence="3">
    <location>
        <begin position="679"/>
        <end position="700"/>
    </location>
</feature>
<feature type="compositionally biased region" description="Basic residues" evidence="3">
    <location>
        <begin position="726"/>
        <end position="736"/>
    </location>
</feature>
<feature type="compositionally biased region" description="Basic and acidic residues" evidence="3">
    <location>
        <begin position="751"/>
        <end position="764"/>
    </location>
</feature>
<feature type="compositionally biased region" description="Polar residues" evidence="3">
    <location>
        <begin position="798"/>
        <end position="844"/>
    </location>
</feature>
<feature type="compositionally biased region" description="Basic and acidic residues" evidence="3">
    <location>
        <begin position="855"/>
        <end position="876"/>
    </location>
</feature>
<feature type="compositionally biased region" description="Low complexity" evidence="3">
    <location>
        <begin position="897"/>
        <end position="908"/>
    </location>
</feature>
<feature type="compositionally biased region" description="Basic and acidic residues" evidence="3">
    <location>
        <begin position="926"/>
        <end position="950"/>
    </location>
</feature>
<feature type="compositionally biased region" description="Low complexity" evidence="3">
    <location>
        <begin position="952"/>
        <end position="963"/>
    </location>
</feature>
<feature type="compositionally biased region" description="Basic and acidic residues" evidence="3">
    <location>
        <begin position="1020"/>
        <end position="1042"/>
    </location>
</feature>
<feature type="compositionally biased region" description="Basic and acidic residues" evidence="3">
    <location>
        <begin position="1097"/>
        <end position="1113"/>
    </location>
</feature>
<feature type="compositionally biased region" description="Basic and acidic residues" evidence="3">
    <location>
        <begin position="1153"/>
        <end position="1187"/>
    </location>
</feature>
<feature type="compositionally biased region" description="Basic and acidic residues" evidence="3">
    <location>
        <begin position="1195"/>
        <end position="1208"/>
    </location>
</feature>
<feature type="compositionally biased region" description="Polar residues" evidence="3">
    <location>
        <begin position="1286"/>
        <end position="1296"/>
    </location>
</feature>
<feature type="compositionally biased region" description="Gly residues" evidence="3">
    <location>
        <begin position="1328"/>
        <end position="1337"/>
    </location>
</feature>
<feature type="modified residue" description="Phosphoserine" evidence="13 17">
    <location>
        <position position="358"/>
    </location>
</feature>
<feature type="modified residue" description="Phosphoserine" evidence="1">
    <location>
        <position position="361"/>
    </location>
</feature>
<feature type="modified residue" description="Phosphoserine" evidence="17">
    <location>
        <position position="379"/>
    </location>
</feature>
<feature type="modified residue" description="Phosphothreonine" evidence="17">
    <location>
        <position position="381"/>
    </location>
</feature>
<feature type="modified residue" description="Phosphoserine" evidence="17 18">
    <location>
        <position position="413"/>
    </location>
</feature>
<feature type="modified residue" description="Phosphoserine" evidence="17">
    <location>
        <position position="433"/>
    </location>
</feature>
<feature type="modified residue" description="Phosphoserine" evidence="17">
    <location>
        <position position="446"/>
    </location>
</feature>
<feature type="modified residue" description="Phosphoserine" evidence="17">
    <location>
        <position position="452"/>
    </location>
</feature>
<feature type="modified residue" description="Phosphoserine" evidence="17">
    <location>
        <position position="467"/>
    </location>
</feature>
<feature type="modified residue" description="Phosphoserine" evidence="17">
    <location>
        <position position="470"/>
    </location>
</feature>
<feature type="modified residue" description="Phosphoserine" evidence="1">
    <location>
        <position position="533"/>
    </location>
</feature>
<feature type="modified residue" description="Phosphoserine" evidence="13 15 16 17">
    <location>
        <position position="576"/>
    </location>
</feature>
<feature type="modified residue" description="Phosphoserine" evidence="13 15 16 17">
    <location>
        <position position="578"/>
    </location>
</feature>
<feature type="modified residue" description="Phosphoserine" evidence="17">
    <location>
        <position position="743"/>
    </location>
</feature>
<feature type="modified residue" description="Phosphothreonine" evidence="16 17">
    <location>
        <position position="746"/>
    </location>
</feature>
<feature type="modified residue" description="Phosphoserine" evidence="17">
    <location>
        <position position="758"/>
    </location>
</feature>
<feature type="modified residue" description="Phosphoserine" evidence="15 17">
    <location>
        <position position="804"/>
    </location>
</feature>
<feature type="modified residue" description="Phosphothreonine" evidence="17">
    <location>
        <position position="823"/>
    </location>
</feature>
<feature type="modified residue" description="Phosphoserine" evidence="14 17">
    <location>
        <position position="842"/>
    </location>
</feature>
<feature type="modified residue" description="Phosphoserine" evidence="13">
    <location>
        <position position="846"/>
    </location>
</feature>
<feature type="modified residue" description="Phosphoserine" evidence="12 13 14 17">
    <location>
        <position position="849"/>
    </location>
</feature>
<feature type="modified residue" description="Phosphoserine" evidence="13 16 17 18">
    <location>
        <position position="1055"/>
    </location>
</feature>
<feature type="cross-link" description="Glycyl lysine isopeptide (Lys-Gly) (interchain with G-Cter in SUMO2)" evidence="20">
    <location>
        <position position="479"/>
    </location>
</feature>
<feature type="cross-link" description="Glycyl lysine isopeptide (Lys-Gly) (interchain with G-Cter in SUMO2)" evidence="19 20">
    <location>
        <position position="789"/>
    </location>
</feature>
<feature type="cross-link" description="Glycyl lysine isopeptide (Lys-Gly) (interchain with G-Cter in SUMO2)" evidence="20">
    <location>
        <position position="1061"/>
    </location>
</feature>
<feature type="cross-link" description="Glycyl lysine isopeptide (Lys-Gly) (interchain with G-Cter in SUMO2)" evidence="20">
    <location>
        <position position="1153"/>
    </location>
</feature>
<feature type="cross-link" description="Glycyl lysine isopeptide (Lys-Gly) (interchain with G-Cter in SUMO2)" evidence="20">
    <location>
        <position position="1297"/>
    </location>
</feature>
<feature type="splice variant" id="VSP_059082" description="In isoform 2.">
    <original>M</original>
    <variation>Q</variation>
    <location>
        <position position="250"/>
    </location>
</feature>
<feature type="splice variant" id="VSP_059083" description="In isoform 2.">
    <location>
        <begin position="251"/>
        <end position="1411"/>
    </location>
</feature>
<feature type="mutagenesis site" description="Abolished interaction with INTS13 component of the integrator complex." evidence="6">
    <original>I</original>
    <variation>A</variation>
    <location>
        <position position="36"/>
    </location>
</feature>
<feature type="mutagenesis site" description="Abolished interaction with INTS13 component of the integrator complex." evidence="6">
    <original>D</original>
    <variation>A</variation>
    <location>
        <position position="37"/>
    </location>
</feature>
<feature type="sequence conflict" description="In Ref. 2; BAA20755." evidence="9" ref="2">
    <original>D</original>
    <variation>N</variation>
    <location>
        <position position="766"/>
    </location>
</feature>
<feature type="strand" evidence="21">
    <location>
        <begin position="30"/>
        <end position="32"/>
    </location>
</feature>
<feature type="strand" evidence="21">
    <location>
        <begin position="34"/>
        <end position="36"/>
    </location>
</feature>
<protein>
    <recommendedName>
        <fullName evidence="9">Zinc finger protein 609</fullName>
    </recommendedName>
</protein>
<evidence type="ECO:0000250" key="1">
    <source>
        <dbReference type="UniProtKB" id="Q8BZ47"/>
    </source>
</evidence>
<evidence type="ECO:0000255" key="2">
    <source>
        <dbReference type="PROSITE-ProRule" id="PRU00042"/>
    </source>
</evidence>
<evidence type="ECO:0000256" key="3">
    <source>
        <dbReference type="SAM" id="MobiDB-lite"/>
    </source>
</evidence>
<evidence type="ECO:0000269" key="4">
    <source>
    </source>
</evidence>
<evidence type="ECO:0000269" key="5">
    <source>
    </source>
</evidence>
<evidence type="ECO:0000269" key="6">
    <source>
    </source>
</evidence>
<evidence type="ECO:0000303" key="7">
    <source>
    </source>
</evidence>
<evidence type="ECO:0000303" key="8">
    <source>
    </source>
</evidence>
<evidence type="ECO:0000305" key="9"/>
<evidence type="ECO:0000312" key="10">
    <source>
        <dbReference type="HGNC" id="HGNC:29003"/>
    </source>
</evidence>
<evidence type="ECO:0007744" key="11">
    <source>
        <dbReference type="PDB" id="8PK5"/>
    </source>
</evidence>
<evidence type="ECO:0007744" key="12">
    <source>
    </source>
</evidence>
<evidence type="ECO:0007744" key="13">
    <source>
    </source>
</evidence>
<evidence type="ECO:0007744" key="14">
    <source>
    </source>
</evidence>
<evidence type="ECO:0007744" key="15">
    <source>
    </source>
</evidence>
<evidence type="ECO:0007744" key="16">
    <source>
    </source>
</evidence>
<evidence type="ECO:0007744" key="17">
    <source>
    </source>
</evidence>
<evidence type="ECO:0007744" key="18">
    <source>
    </source>
</evidence>
<evidence type="ECO:0007744" key="19">
    <source>
    </source>
</evidence>
<evidence type="ECO:0007744" key="20">
    <source>
    </source>
</evidence>
<evidence type="ECO:0007829" key="21">
    <source>
        <dbReference type="PDB" id="8PK5"/>
    </source>
</evidence>
<dbReference type="EMBL" id="AC090543">
    <property type="status" value="NOT_ANNOTATED_CDS"/>
    <property type="molecule type" value="Genomic_DNA"/>
</dbReference>
<dbReference type="EMBL" id="AB002293">
    <property type="protein sequence ID" value="BAA20755.1"/>
    <property type="molecule type" value="mRNA"/>
</dbReference>
<dbReference type="EMBL" id="BC110401">
    <property type="protein sequence ID" value="AAI10402.1"/>
    <property type="molecule type" value="mRNA"/>
</dbReference>
<dbReference type="CCDS" id="CCDS32270.1">
    <molecule id="O15014-1"/>
</dbReference>
<dbReference type="RefSeq" id="NP_055857.1">
    <molecule id="O15014-1"/>
    <property type="nucleotide sequence ID" value="NM_015042.2"/>
</dbReference>
<dbReference type="RefSeq" id="XP_011519688.1">
    <property type="nucleotide sequence ID" value="XM_011521386.2"/>
</dbReference>
<dbReference type="RefSeq" id="XP_016877510.1">
    <molecule id="O15014-1"/>
    <property type="nucleotide sequence ID" value="XM_017022021.2"/>
</dbReference>
<dbReference type="RefSeq" id="XP_047288219.1">
    <molecule id="O15014-1"/>
    <property type="nucleotide sequence ID" value="XM_047432263.1"/>
</dbReference>
<dbReference type="RefSeq" id="XP_047288221.1">
    <molecule id="O15014-1"/>
    <property type="nucleotide sequence ID" value="XM_047432265.1"/>
</dbReference>
<dbReference type="RefSeq" id="XP_047288222.1">
    <molecule id="O15014-1"/>
    <property type="nucleotide sequence ID" value="XM_047432266.1"/>
</dbReference>
<dbReference type="RefSeq" id="XP_054233523.1">
    <molecule id="O15014-1"/>
    <property type="nucleotide sequence ID" value="XM_054377548.1"/>
</dbReference>
<dbReference type="RefSeq" id="XP_054233524.1">
    <molecule id="O15014-1"/>
    <property type="nucleotide sequence ID" value="XM_054377549.1"/>
</dbReference>
<dbReference type="RefSeq" id="XP_054233525.1">
    <molecule id="O15014-1"/>
    <property type="nucleotide sequence ID" value="XM_054377550.1"/>
</dbReference>
<dbReference type="RefSeq" id="XP_054233526.1">
    <molecule id="O15014-1"/>
    <property type="nucleotide sequence ID" value="XM_054377551.1"/>
</dbReference>
<dbReference type="PDB" id="8PK5">
    <property type="method" value="X-ray"/>
    <property type="resolution" value="2.50 A"/>
    <property type="chains" value="B=25-41"/>
</dbReference>
<dbReference type="PDBsum" id="8PK5"/>
<dbReference type="SMR" id="O15014"/>
<dbReference type="BioGRID" id="116695">
    <property type="interactions" value="153"/>
</dbReference>
<dbReference type="DIP" id="DIP-50012N"/>
<dbReference type="FunCoup" id="O15014">
    <property type="interactions" value="3542"/>
</dbReference>
<dbReference type="IntAct" id="O15014">
    <property type="interactions" value="113"/>
</dbReference>
<dbReference type="MINT" id="O15014"/>
<dbReference type="STRING" id="9606.ENSP00000316527"/>
<dbReference type="GlyCosmos" id="O15014">
    <property type="glycosylation" value="2 sites, 1 glycan"/>
</dbReference>
<dbReference type="GlyGen" id="O15014">
    <property type="glycosylation" value="9 sites, 1 O-linked glycan (7 sites)"/>
</dbReference>
<dbReference type="iPTMnet" id="O15014"/>
<dbReference type="PhosphoSitePlus" id="O15014"/>
<dbReference type="BioMuta" id="ZNF609"/>
<dbReference type="jPOST" id="O15014"/>
<dbReference type="MassIVE" id="O15014"/>
<dbReference type="PaxDb" id="9606-ENSP00000316527"/>
<dbReference type="PeptideAtlas" id="O15014"/>
<dbReference type="ProteomicsDB" id="48369"/>
<dbReference type="Pumba" id="O15014"/>
<dbReference type="Antibodypedia" id="25830">
    <property type="antibodies" value="37 antibodies from 13 providers"/>
</dbReference>
<dbReference type="DNASU" id="23060"/>
<dbReference type="Ensembl" id="ENST00000326648.5">
    <molecule id="O15014-1"/>
    <property type="protein sequence ID" value="ENSP00000316527.3"/>
    <property type="gene ID" value="ENSG00000180357.10"/>
</dbReference>
<dbReference type="GeneID" id="23060"/>
<dbReference type="KEGG" id="hsa:23060"/>
<dbReference type="MANE-Select" id="ENST00000326648.5">
    <property type="protein sequence ID" value="ENSP00000316527.3"/>
    <property type="RefSeq nucleotide sequence ID" value="NM_015042.2"/>
    <property type="RefSeq protein sequence ID" value="NP_055857.1"/>
</dbReference>
<dbReference type="UCSC" id="uc002ann.4">
    <molecule id="O15014-1"/>
    <property type="organism name" value="human"/>
</dbReference>
<dbReference type="AGR" id="HGNC:29003"/>
<dbReference type="CTD" id="23060"/>
<dbReference type="DisGeNET" id="23060"/>
<dbReference type="GeneCards" id="ZNF609"/>
<dbReference type="HGNC" id="HGNC:29003">
    <property type="gene designation" value="ZNF609"/>
</dbReference>
<dbReference type="HPA" id="ENSG00000180357">
    <property type="expression patterns" value="Low tissue specificity"/>
</dbReference>
<dbReference type="MIM" id="617474">
    <property type="type" value="gene"/>
</dbReference>
<dbReference type="neXtProt" id="NX_O15014"/>
<dbReference type="OpenTargets" id="ENSG00000180357"/>
<dbReference type="PharmGKB" id="PA134952302"/>
<dbReference type="VEuPathDB" id="HostDB:ENSG00000180357"/>
<dbReference type="eggNOG" id="ENOG502RCUP">
    <property type="taxonomic scope" value="Eukaryota"/>
</dbReference>
<dbReference type="GeneTree" id="ENSGT00390000008748"/>
<dbReference type="HOGENOM" id="CLU_004142_0_0_1"/>
<dbReference type="InParanoid" id="O15014"/>
<dbReference type="OMA" id="VDRNCPS"/>
<dbReference type="OrthoDB" id="5863628at2759"/>
<dbReference type="PAN-GO" id="O15014">
    <property type="GO annotations" value="2 GO annotations based on evolutionary models"/>
</dbReference>
<dbReference type="PhylomeDB" id="O15014"/>
<dbReference type="TreeFam" id="TF329775"/>
<dbReference type="PathwayCommons" id="O15014"/>
<dbReference type="SignaLink" id="O15014"/>
<dbReference type="BioGRID-ORCS" id="23060">
    <property type="hits" value="17 hits in 1155 CRISPR screens"/>
</dbReference>
<dbReference type="ChiTaRS" id="ZNF609">
    <property type="organism name" value="human"/>
</dbReference>
<dbReference type="GenomeRNAi" id="23060"/>
<dbReference type="Pharos" id="O15014">
    <property type="development level" value="Tdark"/>
</dbReference>
<dbReference type="PRO" id="PR:O15014"/>
<dbReference type="Proteomes" id="UP000005640">
    <property type="component" value="Chromosome 15"/>
</dbReference>
<dbReference type="RNAct" id="O15014">
    <property type="molecule type" value="protein"/>
</dbReference>
<dbReference type="Bgee" id="ENSG00000180357">
    <property type="expression patterns" value="Expressed in ventricular zone and 154 other cell types or tissues"/>
</dbReference>
<dbReference type="ExpressionAtlas" id="O15014">
    <property type="expression patterns" value="baseline and differential"/>
</dbReference>
<dbReference type="GO" id="GO:0005654">
    <property type="term" value="C:nucleoplasm"/>
    <property type="evidence" value="ECO:0000314"/>
    <property type="project" value="HPA"/>
</dbReference>
<dbReference type="GO" id="GO:0005634">
    <property type="term" value="C:nucleus"/>
    <property type="evidence" value="ECO:0000314"/>
    <property type="project" value="UniProtKB"/>
</dbReference>
<dbReference type="GO" id="GO:0000981">
    <property type="term" value="F:DNA-binding transcription factor activity, RNA polymerase II-specific"/>
    <property type="evidence" value="ECO:0000250"/>
    <property type="project" value="UniProtKB"/>
</dbReference>
<dbReference type="GO" id="GO:1990841">
    <property type="term" value="F:promoter-specific chromatin binding"/>
    <property type="evidence" value="ECO:0000250"/>
    <property type="project" value="ARUK-UCL"/>
</dbReference>
<dbReference type="GO" id="GO:0008270">
    <property type="term" value="F:zinc ion binding"/>
    <property type="evidence" value="ECO:0007669"/>
    <property type="project" value="UniProtKB-KW"/>
</dbReference>
<dbReference type="GO" id="GO:0007517">
    <property type="term" value="P:muscle organ development"/>
    <property type="evidence" value="ECO:0007669"/>
    <property type="project" value="UniProtKB-KW"/>
</dbReference>
<dbReference type="GO" id="GO:2001224">
    <property type="term" value="P:positive regulation of neuron migration"/>
    <property type="evidence" value="ECO:0000250"/>
    <property type="project" value="UniProtKB"/>
</dbReference>
<dbReference type="GO" id="GO:0045944">
    <property type="term" value="P:positive regulation of transcription by RNA polymerase II"/>
    <property type="evidence" value="ECO:0000250"/>
    <property type="project" value="UniProtKB"/>
</dbReference>
<dbReference type="GO" id="GO:2000291">
    <property type="term" value="P:regulation of myoblast proliferation"/>
    <property type="evidence" value="ECO:0000314"/>
    <property type="project" value="UniProtKB"/>
</dbReference>
<dbReference type="GO" id="GO:0006357">
    <property type="term" value="P:regulation of transcription by RNA polymerase II"/>
    <property type="evidence" value="ECO:0000250"/>
    <property type="project" value="UniProtKB"/>
</dbReference>
<dbReference type="InterPro" id="IPR040010">
    <property type="entry name" value="ZN608/ZN609"/>
</dbReference>
<dbReference type="InterPro" id="IPR013087">
    <property type="entry name" value="Znf_C2H2_type"/>
</dbReference>
<dbReference type="PANTHER" id="PTHR21564">
    <property type="entry name" value="BRAKELESS PROTEIN"/>
    <property type="match status" value="1"/>
</dbReference>
<dbReference type="PANTHER" id="PTHR21564:SF2">
    <property type="entry name" value="ZINC FINGER PROTEIN 609"/>
    <property type="match status" value="1"/>
</dbReference>
<dbReference type="PROSITE" id="PS00028">
    <property type="entry name" value="ZINC_FINGER_C2H2_1"/>
    <property type="match status" value="1"/>
</dbReference>
<dbReference type="PROSITE" id="PS50157">
    <property type="entry name" value="ZINC_FINGER_C2H2_2"/>
    <property type="match status" value="1"/>
</dbReference>
<proteinExistence type="evidence at protein level"/>
<keyword id="KW-0002">3D-structure</keyword>
<keyword id="KW-0010">Activator</keyword>
<keyword id="KW-0025">Alternative splicing</keyword>
<keyword id="KW-0217">Developmental protein</keyword>
<keyword id="KW-1017">Isopeptide bond</keyword>
<keyword id="KW-0479">Metal-binding</keyword>
<keyword id="KW-0517">Myogenesis</keyword>
<keyword id="KW-0539">Nucleus</keyword>
<keyword id="KW-0597">Phosphoprotein</keyword>
<keyword id="KW-1267">Proteomics identification</keyword>
<keyword id="KW-1185">Reference proteome</keyword>
<keyword id="KW-0804">Transcription</keyword>
<keyword id="KW-0805">Transcription regulation</keyword>
<keyword id="KW-0832">Ubl conjugation</keyword>
<keyword id="KW-0862">Zinc</keyword>
<keyword id="KW-0863">Zinc-finger</keyword>
<organism>
    <name type="scientific">Homo sapiens</name>
    <name type="common">Human</name>
    <dbReference type="NCBI Taxonomy" id="9606"/>
    <lineage>
        <taxon>Eukaryota</taxon>
        <taxon>Metazoa</taxon>
        <taxon>Chordata</taxon>
        <taxon>Craniata</taxon>
        <taxon>Vertebrata</taxon>
        <taxon>Euteleostomi</taxon>
        <taxon>Mammalia</taxon>
        <taxon>Eutheria</taxon>
        <taxon>Euarchontoglires</taxon>
        <taxon>Primates</taxon>
        <taxon>Haplorrhini</taxon>
        <taxon>Catarrhini</taxon>
        <taxon>Hominidae</taxon>
        <taxon>Homo</taxon>
    </lineage>
</organism>